<proteinExistence type="inferred from homology"/>
<feature type="chain" id="PRO_0000320843" description="Protein translocase subunit SecA">
    <location>
        <begin position="1"/>
        <end position="908"/>
    </location>
</feature>
<feature type="region of interest" description="Disordered" evidence="2">
    <location>
        <begin position="871"/>
        <end position="908"/>
    </location>
</feature>
<feature type="compositionally biased region" description="Polar residues" evidence="2">
    <location>
        <begin position="874"/>
        <end position="884"/>
    </location>
</feature>
<feature type="binding site" evidence="1">
    <location>
        <position position="87"/>
    </location>
    <ligand>
        <name>ATP</name>
        <dbReference type="ChEBI" id="CHEBI:30616"/>
    </ligand>
</feature>
<feature type="binding site" evidence="1">
    <location>
        <begin position="105"/>
        <end position="109"/>
    </location>
    <ligand>
        <name>ATP</name>
        <dbReference type="ChEBI" id="CHEBI:30616"/>
    </ligand>
</feature>
<feature type="binding site" evidence="1">
    <location>
        <position position="494"/>
    </location>
    <ligand>
        <name>ATP</name>
        <dbReference type="ChEBI" id="CHEBI:30616"/>
    </ligand>
</feature>
<sequence>MIQNILRVVFGSKFERDLKKLIPIVRQINSLEESIKGMDDSTLSSQTKKFKERIVQGESLDSILPEAFATVREVSLRTMGMRHFDVQMMGGIALHGGNISEMKTGEGKTLTSTLAVYLNSLAGNGVHVVTVNDYLAKRDANWMKPIYDFLGISVGVIQHDMDHEQRKVAYAADITYGTNNEFGFDYLRDNMVSHKDHKVQRSHFFAIVDEVDSILIDEARTPLIISGPSDEATDKYVRVNKIIPKLSEGEDFEVDEKARNVLLTEKGVSHVEEILSIENLYAPENVDLVHHVHQALKAHKIFRVDKDYVVQQGQVVIIDEFTGRPMEGRRYSDGLHQAIEAKENVTIAKESQTLASITFQNYFRMYDKLAGMTGTADTEAEEFKKIYNLDVIVIPPNVSVQRKDSPDRVYRTEKEKFQAILTEIRELQSKKQPVLVGTISIEKSEVLSKMLASAGIQHNVLNAKFHQKEAEIVANAGKPGAVTIATNMAGRGTDIVLGGAQLYKENLETWKDEDEIVKQFKESILRQNLEYAESLMQKMDSGTKQKRASEILSSVKIWKKNHEEVLAAGGLHILGTERHEARRIDNQLRGRSGRQGDPGSSRFYLSLQDDLMRIFGSDRISGLMKWANMPEGQEIESKMVSNAIARAQKRVEGHNFDIRKHLLEYDDVMNRQRIVIYKMRNEVLENEDISPLISGFIEETVENQIVTHCEGNNPSAWNLESLKEWSDGLDLNLQIDEVEFKKSKNPQLSLFEKVSSTAKLKYESKAEKIGKDIWKLLERNIFLDILDHRWKEHLYSMDHLREGIWTVGYSERNPLVEYKLQGFRMFDTAIENLKNEIVNFIFRVEVSENSKLPEEKKEYKKVGQEITGGFQEFSGGNLNRSQSNGSSVTVTTSSGGGTERKTSRRRKR</sequence>
<gene>
    <name evidence="1" type="primary">secA</name>
    <name type="ordered locus">LA_1960</name>
</gene>
<name>SECA_LEPIN</name>
<evidence type="ECO:0000255" key="1">
    <source>
        <dbReference type="HAMAP-Rule" id="MF_01382"/>
    </source>
</evidence>
<evidence type="ECO:0000256" key="2">
    <source>
        <dbReference type="SAM" id="MobiDB-lite"/>
    </source>
</evidence>
<reference key="1">
    <citation type="journal article" date="2003" name="Nature">
        <title>Unique physiological and pathogenic features of Leptospira interrogans revealed by whole-genome sequencing.</title>
        <authorList>
            <person name="Ren S.-X."/>
            <person name="Fu G."/>
            <person name="Jiang X.-G."/>
            <person name="Zeng R."/>
            <person name="Miao Y.-G."/>
            <person name="Xu H."/>
            <person name="Zhang Y.-X."/>
            <person name="Xiong H."/>
            <person name="Lu G."/>
            <person name="Lu L.-F."/>
            <person name="Jiang H.-Q."/>
            <person name="Jia J."/>
            <person name="Tu Y.-F."/>
            <person name="Jiang J.-X."/>
            <person name="Gu W.-Y."/>
            <person name="Zhang Y.-Q."/>
            <person name="Cai Z."/>
            <person name="Sheng H.-H."/>
            <person name="Yin H.-F."/>
            <person name="Zhang Y."/>
            <person name="Zhu G.-F."/>
            <person name="Wan M."/>
            <person name="Huang H.-L."/>
            <person name="Qian Z."/>
            <person name="Wang S.-Y."/>
            <person name="Ma W."/>
            <person name="Yao Z.-J."/>
            <person name="Shen Y."/>
            <person name="Qiang B.-Q."/>
            <person name="Xia Q.-C."/>
            <person name="Guo X.-K."/>
            <person name="Danchin A."/>
            <person name="Saint Girons I."/>
            <person name="Somerville R.L."/>
            <person name="Wen Y.-M."/>
            <person name="Shi M.-H."/>
            <person name="Chen Z."/>
            <person name="Xu J.-G."/>
            <person name="Zhao G.-P."/>
        </authorList>
    </citation>
    <scope>NUCLEOTIDE SEQUENCE [LARGE SCALE GENOMIC DNA]</scope>
    <source>
        <strain>56601</strain>
    </source>
</reference>
<protein>
    <recommendedName>
        <fullName evidence="1">Protein translocase subunit SecA</fullName>
        <ecNumber evidence="1">7.4.2.8</ecNumber>
    </recommendedName>
</protein>
<keyword id="KW-0067">ATP-binding</keyword>
<keyword id="KW-0997">Cell inner membrane</keyword>
<keyword id="KW-1003">Cell membrane</keyword>
<keyword id="KW-0963">Cytoplasm</keyword>
<keyword id="KW-0472">Membrane</keyword>
<keyword id="KW-0547">Nucleotide-binding</keyword>
<keyword id="KW-0653">Protein transport</keyword>
<keyword id="KW-1185">Reference proteome</keyword>
<keyword id="KW-1278">Translocase</keyword>
<keyword id="KW-0811">Translocation</keyword>
<keyword id="KW-0813">Transport</keyword>
<accession>Q8F4S9</accession>
<dbReference type="EC" id="7.4.2.8" evidence="1"/>
<dbReference type="EMBL" id="AE010300">
    <property type="protein sequence ID" value="AAN49159.2"/>
    <property type="molecule type" value="Genomic_DNA"/>
</dbReference>
<dbReference type="RefSeq" id="NP_712141.2">
    <property type="nucleotide sequence ID" value="NC_004342.2"/>
</dbReference>
<dbReference type="RefSeq" id="WP_000615621.1">
    <property type="nucleotide sequence ID" value="NC_004342.2"/>
</dbReference>
<dbReference type="SMR" id="Q8F4S9"/>
<dbReference type="FunCoup" id="Q8F4S9">
    <property type="interactions" value="508"/>
</dbReference>
<dbReference type="STRING" id="189518.LA_1960"/>
<dbReference type="PaxDb" id="189518-LA_1960"/>
<dbReference type="EnsemblBacteria" id="AAN49159">
    <property type="protein sequence ID" value="AAN49159"/>
    <property type="gene ID" value="LA_1960"/>
</dbReference>
<dbReference type="GeneID" id="61141839"/>
<dbReference type="KEGG" id="lil:LA_1960"/>
<dbReference type="PATRIC" id="fig|189518.3.peg.1953"/>
<dbReference type="HOGENOM" id="CLU_005314_3_0_12"/>
<dbReference type="InParanoid" id="Q8F4S9"/>
<dbReference type="OrthoDB" id="9805579at2"/>
<dbReference type="Proteomes" id="UP000001408">
    <property type="component" value="Chromosome I"/>
</dbReference>
<dbReference type="GO" id="GO:0031522">
    <property type="term" value="C:cell envelope Sec protein transport complex"/>
    <property type="evidence" value="ECO:0000318"/>
    <property type="project" value="GO_Central"/>
</dbReference>
<dbReference type="GO" id="GO:0005737">
    <property type="term" value="C:cytoplasm"/>
    <property type="evidence" value="ECO:0007669"/>
    <property type="project" value="UniProtKB-SubCell"/>
</dbReference>
<dbReference type="GO" id="GO:0005886">
    <property type="term" value="C:plasma membrane"/>
    <property type="evidence" value="ECO:0000318"/>
    <property type="project" value="GO_Central"/>
</dbReference>
<dbReference type="GO" id="GO:0005524">
    <property type="term" value="F:ATP binding"/>
    <property type="evidence" value="ECO:0000318"/>
    <property type="project" value="GO_Central"/>
</dbReference>
<dbReference type="GO" id="GO:0008564">
    <property type="term" value="F:protein-exporting ATPase activity"/>
    <property type="evidence" value="ECO:0007669"/>
    <property type="project" value="UniProtKB-EC"/>
</dbReference>
<dbReference type="GO" id="GO:0065002">
    <property type="term" value="P:intracellular protein transmembrane transport"/>
    <property type="evidence" value="ECO:0007669"/>
    <property type="project" value="UniProtKB-UniRule"/>
</dbReference>
<dbReference type="GO" id="GO:0017038">
    <property type="term" value="P:protein import"/>
    <property type="evidence" value="ECO:0007669"/>
    <property type="project" value="InterPro"/>
</dbReference>
<dbReference type="GO" id="GO:0006605">
    <property type="term" value="P:protein targeting"/>
    <property type="evidence" value="ECO:0007669"/>
    <property type="project" value="UniProtKB-UniRule"/>
</dbReference>
<dbReference type="GO" id="GO:0043952">
    <property type="term" value="P:protein transport by the Sec complex"/>
    <property type="evidence" value="ECO:0000318"/>
    <property type="project" value="GO_Central"/>
</dbReference>
<dbReference type="CDD" id="cd17928">
    <property type="entry name" value="DEXDc_SecA"/>
    <property type="match status" value="1"/>
</dbReference>
<dbReference type="CDD" id="cd18803">
    <property type="entry name" value="SF2_C_secA"/>
    <property type="match status" value="1"/>
</dbReference>
<dbReference type="FunFam" id="3.40.50.300:FF:000113">
    <property type="entry name" value="Preprotein translocase subunit SecA"/>
    <property type="match status" value="1"/>
</dbReference>
<dbReference type="FunFam" id="1.10.3060.10:FF:000003">
    <property type="entry name" value="Protein translocase subunit SecA"/>
    <property type="match status" value="1"/>
</dbReference>
<dbReference type="FunFam" id="3.90.1440.10:FF:000002">
    <property type="entry name" value="Protein translocase subunit SecA"/>
    <property type="match status" value="1"/>
</dbReference>
<dbReference type="Gene3D" id="1.10.3060.10">
    <property type="entry name" value="Helical scaffold and wing domains of SecA"/>
    <property type="match status" value="1"/>
</dbReference>
<dbReference type="Gene3D" id="3.40.50.300">
    <property type="entry name" value="P-loop containing nucleotide triphosphate hydrolases"/>
    <property type="match status" value="2"/>
</dbReference>
<dbReference type="Gene3D" id="3.90.1440.10">
    <property type="entry name" value="SecA, preprotein cross-linking domain"/>
    <property type="match status" value="1"/>
</dbReference>
<dbReference type="HAMAP" id="MF_01382">
    <property type="entry name" value="SecA"/>
    <property type="match status" value="1"/>
</dbReference>
<dbReference type="InterPro" id="IPR014001">
    <property type="entry name" value="Helicase_ATP-bd"/>
</dbReference>
<dbReference type="InterPro" id="IPR027417">
    <property type="entry name" value="P-loop_NTPase"/>
</dbReference>
<dbReference type="InterPro" id="IPR000185">
    <property type="entry name" value="SecA"/>
</dbReference>
<dbReference type="InterPro" id="IPR020937">
    <property type="entry name" value="SecA_CS"/>
</dbReference>
<dbReference type="InterPro" id="IPR011115">
    <property type="entry name" value="SecA_DEAD"/>
</dbReference>
<dbReference type="InterPro" id="IPR014018">
    <property type="entry name" value="SecA_motor_DEAD"/>
</dbReference>
<dbReference type="InterPro" id="IPR011130">
    <property type="entry name" value="SecA_preprotein_X-link_dom"/>
</dbReference>
<dbReference type="InterPro" id="IPR044722">
    <property type="entry name" value="SecA_SF2_C"/>
</dbReference>
<dbReference type="InterPro" id="IPR011116">
    <property type="entry name" value="SecA_Wing/Scaffold"/>
</dbReference>
<dbReference type="InterPro" id="IPR036266">
    <property type="entry name" value="SecA_Wing/Scaffold_sf"/>
</dbReference>
<dbReference type="InterPro" id="IPR036670">
    <property type="entry name" value="SecA_X-link_sf"/>
</dbReference>
<dbReference type="NCBIfam" id="NF009538">
    <property type="entry name" value="PRK12904.1"/>
    <property type="match status" value="1"/>
</dbReference>
<dbReference type="NCBIfam" id="TIGR00963">
    <property type="entry name" value="secA"/>
    <property type="match status" value="1"/>
</dbReference>
<dbReference type="PANTHER" id="PTHR30612:SF0">
    <property type="entry name" value="CHLOROPLAST PROTEIN-TRANSPORTING ATPASE"/>
    <property type="match status" value="1"/>
</dbReference>
<dbReference type="PANTHER" id="PTHR30612">
    <property type="entry name" value="SECA INNER MEMBRANE COMPONENT OF SEC PROTEIN SECRETION SYSTEM"/>
    <property type="match status" value="1"/>
</dbReference>
<dbReference type="Pfam" id="PF21090">
    <property type="entry name" value="P-loop_SecA"/>
    <property type="match status" value="1"/>
</dbReference>
<dbReference type="Pfam" id="PF07517">
    <property type="entry name" value="SecA_DEAD"/>
    <property type="match status" value="1"/>
</dbReference>
<dbReference type="Pfam" id="PF01043">
    <property type="entry name" value="SecA_PP_bind"/>
    <property type="match status" value="1"/>
</dbReference>
<dbReference type="Pfam" id="PF07516">
    <property type="entry name" value="SecA_SW"/>
    <property type="match status" value="1"/>
</dbReference>
<dbReference type="PRINTS" id="PR00906">
    <property type="entry name" value="SECA"/>
</dbReference>
<dbReference type="SMART" id="SM00957">
    <property type="entry name" value="SecA_DEAD"/>
    <property type="match status" value="1"/>
</dbReference>
<dbReference type="SMART" id="SM00958">
    <property type="entry name" value="SecA_PP_bind"/>
    <property type="match status" value="1"/>
</dbReference>
<dbReference type="SUPFAM" id="SSF81886">
    <property type="entry name" value="Helical scaffold and wing domains of SecA"/>
    <property type="match status" value="1"/>
</dbReference>
<dbReference type="SUPFAM" id="SSF52540">
    <property type="entry name" value="P-loop containing nucleoside triphosphate hydrolases"/>
    <property type="match status" value="2"/>
</dbReference>
<dbReference type="SUPFAM" id="SSF81767">
    <property type="entry name" value="Pre-protein crosslinking domain of SecA"/>
    <property type="match status" value="1"/>
</dbReference>
<dbReference type="PROSITE" id="PS01312">
    <property type="entry name" value="SECA"/>
    <property type="match status" value="1"/>
</dbReference>
<dbReference type="PROSITE" id="PS51196">
    <property type="entry name" value="SECA_MOTOR_DEAD"/>
    <property type="match status" value="1"/>
</dbReference>
<comment type="function">
    <text evidence="1">Part of the Sec protein translocase complex. Interacts with the SecYEG preprotein conducting channel. Has a central role in coupling the hydrolysis of ATP to the transfer of proteins into and across the cell membrane, serving as an ATP-driven molecular motor driving the stepwise translocation of polypeptide chains across the membrane.</text>
</comment>
<comment type="catalytic activity">
    <reaction evidence="1">
        <text>ATP + H2O + cellular proteinSide 1 = ADP + phosphate + cellular proteinSide 2.</text>
        <dbReference type="EC" id="7.4.2.8"/>
    </reaction>
</comment>
<comment type="subunit">
    <text evidence="1">Monomer and homodimer. Part of the essential Sec protein translocation apparatus which comprises SecA, SecYEG and auxiliary proteins SecDF. Other proteins may also be involved.</text>
</comment>
<comment type="subcellular location">
    <subcellularLocation>
        <location evidence="1">Cell inner membrane</location>
        <topology evidence="1">Peripheral membrane protein</topology>
        <orientation evidence="1">Cytoplasmic side</orientation>
    </subcellularLocation>
    <subcellularLocation>
        <location evidence="1">Cytoplasm</location>
    </subcellularLocation>
    <text evidence="1">Distribution is 50-50.</text>
</comment>
<comment type="similarity">
    <text evidence="1">Belongs to the SecA family.</text>
</comment>
<organism>
    <name type="scientific">Leptospira interrogans serogroup Icterohaemorrhagiae serovar Lai (strain 56601)</name>
    <dbReference type="NCBI Taxonomy" id="189518"/>
    <lineage>
        <taxon>Bacteria</taxon>
        <taxon>Pseudomonadati</taxon>
        <taxon>Spirochaetota</taxon>
        <taxon>Spirochaetia</taxon>
        <taxon>Leptospirales</taxon>
        <taxon>Leptospiraceae</taxon>
        <taxon>Leptospira</taxon>
    </lineage>
</organism>